<keyword id="KW-0963">Cytoplasm</keyword>
<keyword id="KW-0433">Leucine-rich repeat</keyword>
<keyword id="KW-1185">Reference proteome</keyword>
<keyword id="KW-0677">Repeat</keyword>
<keyword id="KW-0833">Ubl conjugation pathway</keyword>
<organism>
    <name type="scientific">Xenopus laevis</name>
    <name type="common">African clawed frog</name>
    <dbReference type="NCBI Taxonomy" id="8355"/>
    <lineage>
        <taxon>Eukaryota</taxon>
        <taxon>Metazoa</taxon>
        <taxon>Chordata</taxon>
        <taxon>Craniata</taxon>
        <taxon>Vertebrata</taxon>
        <taxon>Euteleostomi</taxon>
        <taxon>Amphibia</taxon>
        <taxon>Batrachia</taxon>
        <taxon>Anura</taxon>
        <taxon>Pipoidea</taxon>
        <taxon>Pipidae</taxon>
        <taxon>Xenopodinae</taxon>
        <taxon>Xenopus</taxon>
        <taxon>Xenopus</taxon>
    </lineage>
</organism>
<comment type="function">
    <text evidence="1">Substrate recognition component of a SCF (SKP1-CUL1-F-box protein) E3 ubiquitin-protein ligase complex which mediates the ubiquitination and subsequent proteasomal degradation of target proteins. Acts as a positive regulator of the BMP signaling pathway. Required for dorsal/ventral pattern formation (By similarity).</text>
</comment>
<comment type="pathway">
    <text>Protein modification; protein ubiquitination.</text>
</comment>
<comment type="subunit">
    <text evidence="1">Part of the SCF (SKP1-CUL1-F-box) E3 ubiquitin-protein ligase complex SCF(FBXL15).</text>
</comment>
<comment type="subcellular location">
    <subcellularLocation>
        <location evidence="1">Cytoplasm</location>
    </subcellularLocation>
</comment>
<comment type="similarity">
    <text evidence="2">Belongs to the FBXL15 family.</text>
</comment>
<proteinExistence type="evidence at transcript level"/>
<reference key="1">
    <citation type="submission" date="2003-06" db="EMBL/GenBank/DDBJ databases">
        <authorList>
            <consortium name="NIH - Xenopus Gene Collection (XGC) project"/>
        </authorList>
    </citation>
    <scope>NUCLEOTIDE SEQUENCE [LARGE SCALE MRNA]</scope>
</reference>
<name>FXL15_XENLA</name>
<protein>
    <recommendedName>
        <fullName>F-box/LRR-repeat protein 15</fullName>
    </recommendedName>
</protein>
<accession>Q7SZ73</accession>
<sequence length="292" mass="33013">MAKDEDNSRVHLLDLPWEDVLVPHILSYLPLRHILSLQRVSKPFHSLVHIYLCNCRHFDSTQLGPQLPKTTFSELLKNNTVLQKLDLQSCSDWLTDKELLPIIGQNHHLTYINLNSCGQLTRQSLVAISLSCPHLQNICLGHCDWVDCLSMRSLADHCKCLEAIDLTACRQLKDDAISYLVQKSTRLKSLSLAVNANISDIAVEETAKSCRDLEHLDLTGCLRVKNDSIRTLAEYCNNLKSLKVKHCHNVTESSLGNLRKREVVLDVEPPLQRALVLLQDVVGFAPFINLQI</sequence>
<evidence type="ECO:0000250" key="1"/>
<evidence type="ECO:0000305" key="2"/>
<dbReference type="EMBL" id="BC053821">
    <property type="protein sequence ID" value="AAH53821.1"/>
    <property type="molecule type" value="mRNA"/>
</dbReference>
<dbReference type="RefSeq" id="NP_001079747.1">
    <property type="nucleotide sequence ID" value="NM_001086278.1"/>
</dbReference>
<dbReference type="SMR" id="Q7SZ73"/>
<dbReference type="DNASU" id="379436"/>
<dbReference type="GeneID" id="379436"/>
<dbReference type="KEGG" id="xla:379436"/>
<dbReference type="AGR" id="Xenbase:XB-GENE-973064"/>
<dbReference type="CTD" id="379436"/>
<dbReference type="Xenbase" id="XB-GENE-973064">
    <property type="gene designation" value="fbxl15.L"/>
</dbReference>
<dbReference type="OrthoDB" id="27842at2759"/>
<dbReference type="UniPathway" id="UPA00143"/>
<dbReference type="Proteomes" id="UP000186698">
    <property type="component" value="Chromosome 7L"/>
</dbReference>
<dbReference type="Bgee" id="379436">
    <property type="expression patterns" value="Expressed in camera-type eye and 19 other cell types or tissues"/>
</dbReference>
<dbReference type="GO" id="GO:0005737">
    <property type="term" value="C:cytoplasm"/>
    <property type="evidence" value="ECO:0000250"/>
    <property type="project" value="UniProtKB"/>
</dbReference>
<dbReference type="GO" id="GO:0019005">
    <property type="term" value="C:SCF ubiquitin ligase complex"/>
    <property type="evidence" value="ECO:0000250"/>
    <property type="project" value="UniProtKB"/>
</dbReference>
<dbReference type="GO" id="GO:0030282">
    <property type="term" value="P:bone mineralization"/>
    <property type="evidence" value="ECO:0000250"/>
    <property type="project" value="UniProtKB"/>
</dbReference>
<dbReference type="GO" id="GO:0009953">
    <property type="term" value="P:dorsal/ventral pattern formation"/>
    <property type="evidence" value="ECO:0000250"/>
    <property type="project" value="UniProtKB"/>
</dbReference>
<dbReference type="GO" id="GO:0000086">
    <property type="term" value="P:G2/M transition of mitotic cell cycle"/>
    <property type="evidence" value="ECO:0000250"/>
    <property type="project" value="UniProtKB"/>
</dbReference>
<dbReference type="GO" id="GO:0030513">
    <property type="term" value="P:positive regulation of BMP signaling pathway"/>
    <property type="evidence" value="ECO:0000250"/>
    <property type="project" value="UniProtKB"/>
</dbReference>
<dbReference type="GO" id="GO:0016567">
    <property type="term" value="P:protein ubiquitination"/>
    <property type="evidence" value="ECO:0000250"/>
    <property type="project" value="UniProtKB"/>
</dbReference>
<dbReference type="GO" id="GO:0031146">
    <property type="term" value="P:SCF-dependent proteasomal ubiquitin-dependent protein catabolic process"/>
    <property type="evidence" value="ECO:0000250"/>
    <property type="project" value="UniProtKB"/>
</dbReference>
<dbReference type="CDD" id="cd22126">
    <property type="entry name" value="F-box_FBXL15"/>
    <property type="match status" value="1"/>
</dbReference>
<dbReference type="FunFam" id="3.80.10.10:FF:000113">
    <property type="entry name" value="F-box/LRR-repeat protein 15 isoform X1"/>
    <property type="match status" value="1"/>
</dbReference>
<dbReference type="Gene3D" id="3.80.10.10">
    <property type="entry name" value="Ribonuclease Inhibitor"/>
    <property type="match status" value="1"/>
</dbReference>
<dbReference type="InterPro" id="IPR036047">
    <property type="entry name" value="F-box-like_dom_sf"/>
</dbReference>
<dbReference type="InterPro" id="IPR001810">
    <property type="entry name" value="F-box_dom"/>
</dbReference>
<dbReference type="InterPro" id="IPR006553">
    <property type="entry name" value="Leu-rich_rpt_Cys-con_subtyp"/>
</dbReference>
<dbReference type="InterPro" id="IPR032675">
    <property type="entry name" value="LRR_dom_sf"/>
</dbReference>
<dbReference type="PANTHER" id="PTHR13318:SF179">
    <property type="entry name" value="F-BOX_LRR-REPEAT PROTEIN 15"/>
    <property type="match status" value="1"/>
</dbReference>
<dbReference type="PANTHER" id="PTHR13318">
    <property type="entry name" value="PARTNER OF PAIRED, ISOFORM B-RELATED"/>
    <property type="match status" value="1"/>
</dbReference>
<dbReference type="Pfam" id="PF00646">
    <property type="entry name" value="F-box"/>
    <property type="match status" value="1"/>
</dbReference>
<dbReference type="SMART" id="SM00367">
    <property type="entry name" value="LRR_CC"/>
    <property type="match status" value="6"/>
</dbReference>
<dbReference type="SUPFAM" id="SSF81383">
    <property type="entry name" value="F-box domain"/>
    <property type="match status" value="1"/>
</dbReference>
<dbReference type="SUPFAM" id="SSF52047">
    <property type="entry name" value="RNI-like"/>
    <property type="match status" value="1"/>
</dbReference>
<gene>
    <name type="primary">fbxl15</name>
</gene>
<feature type="chain" id="PRO_0000410909" description="F-box/LRR-repeat protein 15">
    <location>
        <begin position="1"/>
        <end position="292"/>
    </location>
</feature>
<feature type="domain" description="F-box">
    <location>
        <begin position="12"/>
        <end position="59"/>
    </location>
</feature>
<feature type="repeat" description="LRR 1">
    <location>
        <begin position="134"/>
        <end position="155"/>
    </location>
</feature>
<feature type="repeat" description="LRR 2">
    <location>
        <begin position="160"/>
        <end position="181"/>
    </location>
</feature>
<feature type="repeat" description="LRR 3">
    <location>
        <begin position="186"/>
        <end position="207"/>
    </location>
</feature>
<feature type="repeat" description="LRR 4">
    <location>
        <begin position="212"/>
        <end position="233"/>
    </location>
</feature>
<feature type="repeat" description="LRR 5">
    <location>
        <begin position="238"/>
        <end position="259"/>
    </location>
</feature>